<accession>P68533</accession>
<accession>Q9T4F1</accession>
<accession>Q9T5F6</accession>
<proteinExistence type="inferred from homology"/>
<evidence type="ECO:0000250" key="1"/>
<evidence type="ECO:0000250" key="2">
    <source>
        <dbReference type="UniProtKB" id="P00157"/>
    </source>
</evidence>
<evidence type="ECO:0000255" key="3">
    <source>
        <dbReference type="PROSITE-ProRule" id="PRU00967"/>
    </source>
</evidence>
<evidence type="ECO:0000255" key="4">
    <source>
        <dbReference type="PROSITE-ProRule" id="PRU00968"/>
    </source>
</evidence>
<dbReference type="EMBL" id="AB021773">
    <property type="protein sequence ID" value="BAB20296.1"/>
    <property type="molecule type" value="Genomic_DNA"/>
</dbReference>
<dbReference type="RefSeq" id="YP_163932.1">
    <property type="nucleotide sequence ID" value="NC_006539.1"/>
</dbReference>
<dbReference type="SMR" id="P68533"/>
<dbReference type="GeneID" id="3190663"/>
<dbReference type="CTD" id="4519"/>
<dbReference type="GO" id="GO:0005743">
    <property type="term" value="C:mitochondrial inner membrane"/>
    <property type="evidence" value="ECO:0007669"/>
    <property type="project" value="UniProtKB-SubCell"/>
</dbReference>
<dbReference type="GO" id="GO:0045275">
    <property type="term" value="C:respiratory chain complex III"/>
    <property type="evidence" value="ECO:0007669"/>
    <property type="project" value="InterPro"/>
</dbReference>
<dbReference type="GO" id="GO:0046872">
    <property type="term" value="F:metal ion binding"/>
    <property type="evidence" value="ECO:0007669"/>
    <property type="project" value="UniProtKB-KW"/>
</dbReference>
<dbReference type="GO" id="GO:0008121">
    <property type="term" value="F:ubiquinol-cytochrome-c reductase activity"/>
    <property type="evidence" value="ECO:0007669"/>
    <property type="project" value="InterPro"/>
</dbReference>
<dbReference type="GO" id="GO:0006122">
    <property type="term" value="P:mitochondrial electron transport, ubiquinol to cytochrome c"/>
    <property type="evidence" value="ECO:0007669"/>
    <property type="project" value="TreeGrafter"/>
</dbReference>
<dbReference type="CDD" id="cd00290">
    <property type="entry name" value="cytochrome_b_C"/>
    <property type="match status" value="1"/>
</dbReference>
<dbReference type="CDD" id="cd00284">
    <property type="entry name" value="Cytochrome_b_N"/>
    <property type="match status" value="1"/>
</dbReference>
<dbReference type="FunFam" id="1.20.810.10:FF:000002">
    <property type="entry name" value="Cytochrome b"/>
    <property type="match status" value="1"/>
</dbReference>
<dbReference type="Gene3D" id="1.20.810.10">
    <property type="entry name" value="Cytochrome Bc1 Complex, Chain C"/>
    <property type="match status" value="1"/>
</dbReference>
<dbReference type="InterPro" id="IPR005798">
    <property type="entry name" value="Cyt_b/b6_C"/>
</dbReference>
<dbReference type="InterPro" id="IPR036150">
    <property type="entry name" value="Cyt_b/b6_C_sf"/>
</dbReference>
<dbReference type="InterPro" id="IPR005797">
    <property type="entry name" value="Cyt_b/b6_N"/>
</dbReference>
<dbReference type="InterPro" id="IPR027387">
    <property type="entry name" value="Cytb/b6-like_sf"/>
</dbReference>
<dbReference type="InterPro" id="IPR030689">
    <property type="entry name" value="Cytochrome_b"/>
</dbReference>
<dbReference type="InterPro" id="IPR048260">
    <property type="entry name" value="Cytochrome_b_C_euk/bac"/>
</dbReference>
<dbReference type="InterPro" id="IPR048259">
    <property type="entry name" value="Cytochrome_b_N_euk/bac"/>
</dbReference>
<dbReference type="InterPro" id="IPR016174">
    <property type="entry name" value="Di-haem_cyt_TM"/>
</dbReference>
<dbReference type="PANTHER" id="PTHR19271">
    <property type="entry name" value="CYTOCHROME B"/>
    <property type="match status" value="1"/>
</dbReference>
<dbReference type="PANTHER" id="PTHR19271:SF16">
    <property type="entry name" value="CYTOCHROME B"/>
    <property type="match status" value="1"/>
</dbReference>
<dbReference type="Pfam" id="PF00032">
    <property type="entry name" value="Cytochrom_B_C"/>
    <property type="match status" value="1"/>
</dbReference>
<dbReference type="Pfam" id="PF00033">
    <property type="entry name" value="Cytochrome_B"/>
    <property type="match status" value="1"/>
</dbReference>
<dbReference type="PIRSF" id="PIRSF038885">
    <property type="entry name" value="COB"/>
    <property type="match status" value="1"/>
</dbReference>
<dbReference type="SUPFAM" id="SSF81648">
    <property type="entry name" value="a domain/subunit of cytochrome bc1 complex (Ubiquinol-cytochrome c reductase)"/>
    <property type="match status" value="1"/>
</dbReference>
<dbReference type="SUPFAM" id="SSF81342">
    <property type="entry name" value="Transmembrane di-heme cytochromes"/>
    <property type="match status" value="1"/>
</dbReference>
<dbReference type="PROSITE" id="PS51003">
    <property type="entry name" value="CYTB_CTER"/>
    <property type="match status" value="1"/>
</dbReference>
<dbReference type="PROSITE" id="PS51002">
    <property type="entry name" value="CYTB_NTER"/>
    <property type="match status" value="1"/>
</dbReference>
<comment type="function">
    <text evidence="2">Component of the ubiquinol-cytochrome c reductase complex (complex III or cytochrome b-c1 complex) that is part of the mitochondrial respiratory chain. The b-c1 complex mediates electron transfer from ubiquinol to cytochrome c. Contributes to the generation of a proton gradient across the mitochondrial membrane that is then used for ATP synthesis.</text>
</comment>
<comment type="cofactor">
    <cofactor evidence="2">
        <name>heme b</name>
        <dbReference type="ChEBI" id="CHEBI:60344"/>
    </cofactor>
    <text evidence="2">Binds 2 heme b groups non-covalently.</text>
</comment>
<comment type="subunit">
    <text evidence="2">The cytochrome bc1 complex contains 3 respiratory subunits (MT-CYB, CYC1 and UQCRFS1), 2 core proteins (UQCRC1 and UQCRC2) and probably 6 low-molecular weight proteins.</text>
</comment>
<comment type="subcellular location">
    <subcellularLocation>
        <location evidence="2">Mitochondrion inner membrane</location>
        <topology evidence="2">Multi-pass membrane protein</topology>
    </subcellularLocation>
</comment>
<comment type="miscellaneous">
    <text evidence="1">Heme 1 (or BL or b562) is low-potential and absorbs at about 562 nm, and heme 2 (or BH or b566) is high-potential and absorbs at about 566 nm.</text>
</comment>
<comment type="similarity">
    <text evidence="3 4">Belongs to the cytochrome b family.</text>
</comment>
<comment type="caution">
    <text evidence="2">The full-length protein contains only eight transmembrane helices, not nine as predicted by bioinformatics tools.</text>
</comment>
<keyword id="KW-0249">Electron transport</keyword>
<keyword id="KW-0349">Heme</keyword>
<keyword id="KW-0408">Iron</keyword>
<keyword id="KW-0472">Membrane</keyword>
<keyword id="KW-0479">Metal-binding</keyword>
<keyword id="KW-0496">Mitochondrion</keyword>
<keyword id="KW-0999">Mitochondrion inner membrane</keyword>
<keyword id="KW-0679">Respiratory chain</keyword>
<keyword id="KW-0812">Transmembrane</keyword>
<keyword id="KW-1133">Transmembrane helix</keyword>
<keyword id="KW-0813">Transport</keyword>
<keyword id="KW-0830">Ubiquinone</keyword>
<gene>
    <name type="primary">mt-cyb</name>
    <name type="synonym">cob</name>
    <name type="synonym">cytb</name>
    <name type="synonym">mtcyb</name>
</gene>
<organism>
    <name type="scientific">Anguilla interioris</name>
    <name type="common">Highlands long-finned eel</name>
    <dbReference type="NCBI Taxonomy" id="86967"/>
    <lineage>
        <taxon>Eukaryota</taxon>
        <taxon>Metazoa</taxon>
        <taxon>Chordata</taxon>
        <taxon>Craniata</taxon>
        <taxon>Vertebrata</taxon>
        <taxon>Euteleostomi</taxon>
        <taxon>Actinopterygii</taxon>
        <taxon>Neopterygii</taxon>
        <taxon>Teleostei</taxon>
        <taxon>Anguilliformes</taxon>
        <taxon>Anguillidae</taxon>
        <taxon>Anguilla</taxon>
    </lineage>
</organism>
<protein>
    <recommendedName>
        <fullName>Cytochrome b</fullName>
    </recommendedName>
    <alternativeName>
        <fullName>Complex III subunit 3</fullName>
    </alternativeName>
    <alternativeName>
        <fullName>Complex III subunit III</fullName>
    </alternativeName>
    <alternativeName>
        <fullName>Cytochrome b-c1 complex subunit 3</fullName>
    </alternativeName>
    <alternativeName>
        <fullName>Ubiquinol-cytochrome-c reductase complex cytochrome b subunit</fullName>
    </alternativeName>
</protein>
<sequence length="379" mass="42601">MANLRKTHPLLKIANDALVDLPTPSNISAWWNFGSLLGLCLISQIITGLFLAMHYTSDISTAFSSVAHICRDVNYGWLIRNLHANGASFFFICLYLHIARGLYYGSYLYKETWNIGVVLFLLVMMTAFVGYVLPWGQMSFWGATVITNLLSAVPYVGDSLVQWIWGGFSVDNATLTRFFAFHFLFPFVVAGATMIHLLFLHETGSNNPVGLNSDADKIPFHPYFSYKDLLGFIIMLTALTMLALFYPNLLGDPDNFTPANPMVTPPHIKPEWYFLFAYAILRSIPNKLGGVLALLSSILVLMVVPILHTSKQRGLTFRPASQLLFWILVADMLVLTWIGGMPVEHPYIIIGQVASVLYFSLFLVLNPLVGWLENKMMNW</sequence>
<geneLocation type="mitochondrion"/>
<name>CYB_ANGIN</name>
<feature type="chain" id="PRO_0000060579" description="Cytochrome b">
    <location>
        <begin position="1"/>
        <end position="379"/>
    </location>
</feature>
<feature type="transmembrane region" description="Helical" evidence="2">
    <location>
        <begin position="33"/>
        <end position="53"/>
    </location>
</feature>
<feature type="transmembrane region" description="Helical" evidence="2">
    <location>
        <begin position="77"/>
        <end position="98"/>
    </location>
</feature>
<feature type="transmembrane region" description="Helical" evidence="2">
    <location>
        <begin position="113"/>
        <end position="133"/>
    </location>
</feature>
<feature type="transmembrane region" description="Helical" evidence="2">
    <location>
        <begin position="178"/>
        <end position="198"/>
    </location>
</feature>
<feature type="transmembrane region" description="Helical" evidence="2">
    <location>
        <begin position="226"/>
        <end position="246"/>
    </location>
</feature>
<feature type="transmembrane region" description="Helical" evidence="2">
    <location>
        <begin position="288"/>
        <end position="308"/>
    </location>
</feature>
<feature type="transmembrane region" description="Helical" evidence="2">
    <location>
        <begin position="320"/>
        <end position="340"/>
    </location>
</feature>
<feature type="transmembrane region" description="Helical" evidence="2">
    <location>
        <begin position="347"/>
        <end position="367"/>
    </location>
</feature>
<feature type="binding site" description="axial binding residue" evidence="2">
    <location>
        <position position="83"/>
    </location>
    <ligand>
        <name>heme b</name>
        <dbReference type="ChEBI" id="CHEBI:60344"/>
        <label>b562</label>
    </ligand>
    <ligandPart>
        <name>Fe</name>
        <dbReference type="ChEBI" id="CHEBI:18248"/>
    </ligandPart>
</feature>
<feature type="binding site" description="axial binding residue" evidence="2">
    <location>
        <position position="97"/>
    </location>
    <ligand>
        <name>heme b</name>
        <dbReference type="ChEBI" id="CHEBI:60344"/>
        <label>b566</label>
    </ligand>
    <ligandPart>
        <name>Fe</name>
        <dbReference type="ChEBI" id="CHEBI:18248"/>
    </ligandPart>
</feature>
<feature type="binding site" description="axial binding residue" evidence="2">
    <location>
        <position position="182"/>
    </location>
    <ligand>
        <name>heme b</name>
        <dbReference type="ChEBI" id="CHEBI:60344"/>
        <label>b562</label>
    </ligand>
    <ligandPart>
        <name>Fe</name>
        <dbReference type="ChEBI" id="CHEBI:18248"/>
    </ligandPart>
</feature>
<feature type="binding site" description="axial binding residue" evidence="2">
    <location>
        <position position="196"/>
    </location>
    <ligand>
        <name>heme b</name>
        <dbReference type="ChEBI" id="CHEBI:60344"/>
        <label>b566</label>
    </ligand>
    <ligandPart>
        <name>Fe</name>
        <dbReference type="ChEBI" id="CHEBI:18248"/>
    </ligandPart>
</feature>
<feature type="binding site" evidence="2">
    <location>
        <position position="201"/>
    </location>
    <ligand>
        <name>a ubiquinone</name>
        <dbReference type="ChEBI" id="CHEBI:16389"/>
    </ligand>
</feature>
<reference key="1">
    <citation type="thesis" date="1998" institute="Ocean Research Institute / University of Tokyo" country="Japan">
        <title>Molecular phylogeny and evolution of the freshwater eels, genus Anguilla.</title>
        <authorList>
            <person name="Aoyama J."/>
        </authorList>
    </citation>
    <scope>NUCLEOTIDE SEQUENCE [GENOMIC DNA]</scope>
    <source>
        <tissue>Liver</tissue>
    </source>
</reference>